<comment type="function">
    <text evidence="1">Catalyzes the formation of the alpha-1,6-glucosidic linkages in glycogen by scission of a 1,4-alpha-linked oligosaccharide from growing alpha-1,4-glucan chains and the subsequent attachment of the oligosaccharide to the alpha-1,6 position.</text>
</comment>
<comment type="catalytic activity">
    <reaction evidence="1">
        <text>Transfers a segment of a (1-&gt;4)-alpha-D-glucan chain to a primary hydroxy group in a similar glucan chain.</text>
        <dbReference type="EC" id="2.4.1.18"/>
    </reaction>
</comment>
<comment type="pathway">
    <text evidence="1">Glycan biosynthesis; glycogen biosynthesis.</text>
</comment>
<comment type="subunit">
    <text evidence="1">Monomer.</text>
</comment>
<comment type="similarity">
    <text evidence="1">Belongs to the glycosyl hydrolase 13 family. GlgB subfamily.</text>
</comment>
<protein>
    <recommendedName>
        <fullName evidence="1">1,4-alpha-glucan branching enzyme GlgB</fullName>
        <ecNumber evidence="1">2.4.1.18</ecNumber>
    </recommendedName>
    <alternativeName>
        <fullName evidence="1">1,4-alpha-D-glucan:1,4-alpha-D-glucan 6-glucosyl-transferase</fullName>
    </alternativeName>
    <alternativeName>
        <fullName evidence="1">Alpha-(1-&gt;4)-glucan branching enzyme</fullName>
    </alternativeName>
    <alternativeName>
        <fullName evidence="1">Glycogen branching enzyme</fullName>
        <shortName evidence="1">BE</shortName>
    </alternativeName>
</protein>
<organism>
    <name type="scientific">Bacillus cereus (strain ATCC 14579 / DSM 31 / CCUG 7414 / JCM 2152 / NBRC 15305 / NCIMB 9373 / NCTC 2599 / NRRL B-3711)</name>
    <dbReference type="NCBI Taxonomy" id="226900"/>
    <lineage>
        <taxon>Bacteria</taxon>
        <taxon>Bacillati</taxon>
        <taxon>Bacillota</taxon>
        <taxon>Bacilli</taxon>
        <taxon>Bacillales</taxon>
        <taxon>Bacillaceae</taxon>
        <taxon>Bacillus</taxon>
        <taxon>Bacillus cereus group</taxon>
    </lineage>
</organism>
<name>GLGB_BACCR</name>
<dbReference type="EC" id="2.4.1.18" evidence="1"/>
<dbReference type="EMBL" id="AE016877">
    <property type="protein sequence ID" value="AAP11766.1"/>
    <property type="molecule type" value="Genomic_DNA"/>
</dbReference>
<dbReference type="RefSeq" id="NP_834565.1">
    <property type="nucleotide sequence ID" value="NC_004722.1"/>
</dbReference>
<dbReference type="RefSeq" id="WP_001100880.1">
    <property type="nucleotide sequence ID" value="NZ_CP138336.1"/>
</dbReference>
<dbReference type="SMR" id="Q816G6"/>
<dbReference type="STRING" id="226900.BC_4867"/>
<dbReference type="CAZy" id="CBM48">
    <property type="family name" value="Carbohydrate-Binding Module Family 48"/>
</dbReference>
<dbReference type="CAZy" id="GH13">
    <property type="family name" value="Glycoside Hydrolase Family 13"/>
</dbReference>
<dbReference type="KEGG" id="bce:BC4867"/>
<dbReference type="PATRIC" id="fig|226900.8.peg.5040"/>
<dbReference type="HOGENOM" id="CLU_004245_3_2_9"/>
<dbReference type="OrthoDB" id="9800174at2"/>
<dbReference type="UniPathway" id="UPA00164"/>
<dbReference type="Proteomes" id="UP000001417">
    <property type="component" value="Chromosome"/>
</dbReference>
<dbReference type="GO" id="GO:0005737">
    <property type="term" value="C:cytoplasm"/>
    <property type="evidence" value="ECO:0000318"/>
    <property type="project" value="GO_Central"/>
</dbReference>
<dbReference type="GO" id="GO:0005829">
    <property type="term" value="C:cytosol"/>
    <property type="evidence" value="ECO:0000318"/>
    <property type="project" value="GO_Central"/>
</dbReference>
<dbReference type="GO" id="GO:0003844">
    <property type="term" value="F:1,4-alpha-glucan branching enzyme activity"/>
    <property type="evidence" value="ECO:0000318"/>
    <property type="project" value="GO_Central"/>
</dbReference>
<dbReference type="GO" id="GO:0043169">
    <property type="term" value="F:cation binding"/>
    <property type="evidence" value="ECO:0007669"/>
    <property type="project" value="InterPro"/>
</dbReference>
<dbReference type="GO" id="GO:0004553">
    <property type="term" value="F:hydrolase activity, hydrolyzing O-glycosyl compounds"/>
    <property type="evidence" value="ECO:0007669"/>
    <property type="project" value="InterPro"/>
</dbReference>
<dbReference type="GO" id="GO:0005978">
    <property type="term" value="P:glycogen biosynthetic process"/>
    <property type="evidence" value="ECO:0000318"/>
    <property type="project" value="GO_Central"/>
</dbReference>
<dbReference type="CDD" id="cd11322">
    <property type="entry name" value="AmyAc_Glg_BE"/>
    <property type="match status" value="1"/>
</dbReference>
<dbReference type="CDD" id="cd02855">
    <property type="entry name" value="E_set_GBE_prok_N"/>
    <property type="match status" value="1"/>
</dbReference>
<dbReference type="FunFam" id="2.60.40.10:FF:000169">
    <property type="entry name" value="1,4-alpha-glucan branching enzyme GlgB"/>
    <property type="match status" value="1"/>
</dbReference>
<dbReference type="FunFam" id="2.60.40.1180:FF:000002">
    <property type="entry name" value="1,4-alpha-glucan branching enzyme GlgB"/>
    <property type="match status" value="1"/>
</dbReference>
<dbReference type="FunFam" id="3.20.20.80:FF:000003">
    <property type="entry name" value="1,4-alpha-glucan branching enzyme GlgB"/>
    <property type="match status" value="1"/>
</dbReference>
<dbReference type="Gene3D" id="3.20.20.80">
    <property type="entry name" value="Glycosidases"/>
    <property type="match status" value="1"/>
</dbReference>
<dbReference type="Gene3D" id="2.60.40.1180">
    <property type="entry name" value="Golgi alpha-mannosidase II"/>
    <property type="match status" value="1"/>
</dbReference>
<dbReference type="Gene3D" id="2.60.40.10">
    <property type="entry name" value="Immunoglobulins"/>
    <property type="match status" value="1"/>
</dbReference>
<dbReference type="HAMAP" id="MF_00685">
    <property type="entry name" value="GlgB"/>
    <property type="match status" value="1"/>
</dbReference>
<dbReference type="InterPro" id="IPR006048">
    <property type="entry name" value="A-amylase/branching_C"/>
</dbReference>
<dbReference type="InterPro" id="IPR037439">
    <property type="entry name" value="Branching_enzy"/>
</dbReference>
<dbReference type="InterPro" id="IPR006407">
    <property type="entry name" value="GlgB"/>
</dbReference>
<dbReference type="InterPro" id="IPR044143">
    <property type="entry name" value="GlgB_N_E_set_prok"/>
</dbReference>
<dbReference type="InterPro" id="IPR006047">
    <property type="entry name" value="Glyco_hydro_13_cat_dom"/>
</dbReference>
<dbReference type="InterPro" id="IPR004193">
    <property type="entry name" value="Glyco_hydro_13_N"/>
</dbReference>
<dbReference type="InterPro" id="IPR013780">
    <property type="entry name" value="Glyco_hydro_b"/>
</dbReference>
<dbReference type="InterPro" id="IPR017853">
    <property type="entry name" value="Glycoside_hydrolase_SF"/>
</dbReference>
<dbReference type="InterPro" id="IPR013783">
    <property type="entry name" value="Ig-like_fold"/>
</dbReference>
<dbReference type="NCBIfam" id="TIGR01515">
    <property type="entry name" value="branching_enzym"/>
    <property type="match status" value="1"/>
</dbReference>
<dbReference type="NCBIfam" id="NF003811">
    <property type="entry name" value="PRK05402.1"/>
    <property type="match status" value="1"/>
</dbReference>
<dbReference type="NCBIfam" id="NF008967">
    <property type="entry name" value="PRK12313.1"/>
    <property type="match status" value="1"/>
</dbReference>
<dbReference type="PANTHER" id="PTHR43651">
    <property type="entry name" value="1,4-ALPHA-GLUCAN-BRANCHING ENZYME"/>
    <property type="match status" value="1"/>
</dbReference>
<dbReference type="PANTHER" id="PTHR43651:SF3">
    <property type="entry name" value="1,4-ALPHA-GLUCAN-BRANCHING ENZYME"/>
    <property type="match status" value="1"/>
</dbReference>
<dbReference type="Pfam" id="PF00128">
    <property type="entry name" value="Alpha-amylase"/>
    <property type="match status" value="2"/>
</dbReference>
<dbReference type="Pfam" id="PF02806">
    <property type="entry name" value="Alpha-amylase_C"/>
    <property type="match status" value="1"/>
</dbReference>
<dbReference type="Pfam" id="PF02922">
    <property type="entry name" value="CBM_48"/>
    <property type="match status" value="1"/>
</dbReference>
<dbReference type="PIRSF" id="PIRSF000463">
    <property type="entry name" value="GlgB"/>
    <property type="match status" value="1"/>
</dbReference>
<dbReference type="SMART" id="SM00642">
    <property type="entry name" value="Aamy"/>
    <property type="match status" value="1"/>
</dbReference>
<dbReference type="SUPFAM" id="SSF51445">
    <property type="entry name" value="(Trans)glycosidases"/>
    <property type="match status" value="1"/>
</dbReference>
<dbReference type="SUPFAM" id="SSF51011">
    <property type="entry name" value="Glycosyl hydrolase domain"/>
    <property type="match status" value="1"/>
</dbReference>
<reference key="1">
    <citation type="journal article" date="2003" name="Nature">
        <title>Genome sequence of Bacillus cereus and comparative analysis with Bacillus anthracis.</title>
        <authorList>
            <person name="Ivanova N."/>
            <person name="Sorokin A."/>
            <person name="Anderson I."/>
            <person name="Galleron N."/>
            <person name="Candelon B."/>
            <person name="Kapatral V."/>
            <person name="Bhattacharyya A."/>
            <person name="Reznik G."/>
            <person name="Mikhailova N."/>
            <person name="Lapidus A."/>
            <person name="Chu L."/>
            <person name="Mazur M."/>
            <person name="Goltsman E."/>
            <person name="Larsen N."/>
            <person name="D'Souza M."/>
            <person name="Walunas T."/>
            <person name="Grechkin Y."/>
            <person name="Pusch G."/>
            <person name="Haselkorn R."/>
            <person name="Fonstein M."/>
            <person name="Ehrlich S.D."/>
            <person name="Overbeek R."/>
            <person name="Kyrpides N.C."/>
        </authorList>
    </citation>
    <scope>NUCLEOTIDE SEQUENCE [LARGE SCALE GENOMIC DNA]</scope>
    <source>
        <strain>ATCC 14579 / DSM 31 / CCUG 7414 / JCM 2152 / NBRC 15305 / NCIMB 9373 / NCTC 2599 / NRRL B-3711</strain>
    </source>
</reference>
<evidence type="ECO:0000255" key="1">
    <source>
        <dbReference type="HAMAP-Rule" id="MF_00685"/>
    </source>
</evidence>
<evidence type="ECO:0000256" key="2">
    <source>
        <dbReference type="SAM" id="MobiDB-lite"/>
    </source>
</evidence>
<gene>
    <name evidence="1" type="primary">glgB</name>
    <name type="ordered locus">BC_4867</name>
</gene>
<feature type="chain" id="PRO_0000188678" description="1,4-alpha-glucan branching enzyme GlgB">
    <location>
        <begin position="1"/>
        <end position="645"/>
    </location>
</feature>
<feature type="region of interest" description="Disordered" evidence="2">
    <location>
        <begin position="619"/>
        <end position="645"/>
    </location>
</feature>
<feature type="compositionally biased region" description="Polar residues" evidence="2">
    <location>
        <begin position="636"/>
        <end position="645"/>
    </location>
</feature>
<feature type="active site" description="Nucleophile" evidence="1">
    <location>
        <position position="309"/>
    </location>
</feature>
<feature type="active site" description="Proton donor" evidence="1">
    <location>
        <position position="352"/>
    </location>
</feature>
<keyword id="KW-0119">Carbohydrate metabolism</keyword>
<keyword id="KW-0320">Glycogen biosynthesis</keyword>
<keyword id="KW-0321">Glycogen metabolism</keyword>
<keyword id="KW-0328">Glycosyltransferase</keyword>
<keyword id="KW-1185">Reference proteome</keyword>
<keyword id="KW-0808">Transferase</keyword>
<accession>Q816G6</accession>
<proteinExistence type="inferred from homology"/>
<sequence>MNVINCEEVKRDEFHTEKYYESYNIFGAHVVTEDEIQGVRFTVWAPHAKAMSVVGDFNEWDYEQHKMLQVTEEGIWSLFIPHIEEGEIYKYAIETLAGDVILKADPYAVYAEVRPNTASVVFDIKGYEWNDKNWNRKKKKKSIYKEAMTVYELHFGSWKKKEDGTLYSYREMVEELIPYVVEHQFTHIEIMPLVEHPYDRSWGYQGTGYYAATSRFGTPHDLMHFVDECHKYGIGVILDWVPGHFCKDAHGLYLFDGTPTYEYKDKDVQENPVWGTVNFDLGKREVRNFLISNALFWMRYFHIDGFRVDAVANMLYWNKEGQEQSNEHAVSFLRELNEAVFAEDEDFLMTAEDSTAWPLVTTPTYEGGLGFNYKWNMGWMNDVLKYMECAPEYRKHIHEKMTFSLLYAYSENFILPLSHDEVVHGKKSLLNKMPGDYWDKFAQLRLLYGYFFTHPGKKLLFMGGEFGQFDEWKDLEDLDWNLHDFEMHRYMHDYFKELIALYKRSKPLWQLDHSPEGFQWIDANNNEQSIFSFIRQGDKQEDALVIVCNFTKATYENYKVGVPDFEYYNEILNSDAQQYGGSGQVNKKRLKTILEPYHNQAAHVEITIPPFGVSILRPVKTRKGSKKQDGSKTKVRSNVTSRGKR</sequence>